<reference key="1">
    <citation type="journal article" date="1993" name="Nucleic Acids Res.">
        <title>Molecular characterization of the yeast meiotic regulatory gene RIM1.</title>
        <authorList>
            <person name="Su S.S.Y."/>
            <person name="Mitchell A.P."/>
        </authorList>
    </citation>
    <scope>NUCLEOTIDE SEQUENCE [GENOMIC DNA]</scope>
    <scope>MUTAGENESIS OF CYS-153; CYS-189; CYS-217 AND SER-255</scope>
    <source>
        <strain>SK1</strain>
    </source>
</reference>
<reference key="2">
    <citation type="journal article" date="1994" name="Science">
        <title>Complete nucleotide sequence of Saccharomyces cerevisiae chromosome VIII.</title>
        <authorList>
            <person name="Johnston M."/>
            <person name="Andrews S."/>
            <person name="Brinkman R."/>
            <person name="Cooper J."/>
            <person name="Ding H."/>
            <person name="Dover J."/>
            <person name="Du Z."/>
            <person name="Favello A."/>
            <person name="Fulton L."/>
            <person name="Gattung S."/>
            <person name="Geisel C."/>
            <person name="Kirsten J."/>
            <person name="Kucaba T."/>
            <person name="Hillier L.W."/>
            <person name="Jier M."/>
            <person name="Johnston L."/>
            <person name="Langston Y."/>
            <person name="Latreille P."/>
            <person name="Louis E.J."/>
            <person name="Macri C."/>
            <person name="Mardis E."/>
            <person name="Menezes S."/>
            <person name="Mouser L."/>
            <person name="Nhan M."/>
            <person name="Rifkin L."/>
            <person name="Riles L."/>
            <person name="St Peter H."/>
            <person name="Trevaskis E."/>
            <person name="Vaughan K."/>
            <person name="Vignati D."/>
            <person name="Wilcox L."/>
            <person name="Wohldman P."/>
            <person name="Waterston R."/>
            <person name="Wilson R."/>
            <person name="Vaudin M."/>
        </authorList>
    </citation>
    <scope>NUCLEOTIDE SEQUENCE [LARGE SCALE GENOMIC DNA]</scope>
    <source>
        <strain>ATCC 204508 / S288c</strain>
    </source>
</reference>
<reference key="3">
    <citation type="journal article" date="2014" name="G3 (Bethesda)">
        <title>The reference genome sequence of Saccharomyces cerevisiae: Then and now.</title>
        <authorList>
            <person name="Engel S.R."/>
            <person name="Dietrich F.S."/>
            <person name="Fisk D.G."/>
            <person name="Binkley G."/>
            <person name="Balakrishnan R."/>
            <person name="Costanzo M.C."/>
            <person name="Dwight S.S."/>
            <person name="Hitz B.C."/>
            <person name="Karra K."/>
            <person name="Nash R.S."/>
            <person name="Weng S."/>
            <person name="Wong E.D."/>
            <person name="Lloyd P."/>
            <person name="Skrzypek M.S."/>
            <person name="Miyasato S.R."/>
            <person name="Simison M."/>
            <person name="Cherry J.M."/>
        </authorList>
    </citation>
    <scope>GENOME REANNOTATION</scope>
    <source>
        <strain>ATCC 204508 / S288c</strain>
    </source>
</reference>
<reference key="4">
    <citation type="journal article" date="2007" name="Genome Res.">
        <title>Approaching a complete repository of sequence-verified protein-encoding clones for Saccharomyces cerevisiae.</title>
        <authorList>
            <person name="Hu Y."/>
            <person name="Rolfs A."/>
            <person name="Bhullar B."/>
            <person name="Murthy T.V.S."/>
            <person name="Zhu C."/>
            <person name="Berger M.F."/>
            <person name="Camargo A.A."/>
            <person name="Kelley F."/>
            <person name="McCarron S."/>
            <person name="Jepson D."/>
            <person name="Richardson A."/>
            <person name="Raphael J."/>
            <person name="Moreira D."/>
            <person name="Taycher E."/>
            <person name="Zuo D."/>
            <person name="Mohr S."/>
            <person name="Kane M.F."/>
            <person name="Williamson J."/>
            <person name="Simpson A.J.G."/>
            <person name="Bulyk M.L."/>
            <person name="Harlow E."/>
            <person name="Marsischky G."/>
            <person name="Kolodner R.D."/>
            <person name="LaBaer J."/>
        </authorList>
    </citation>
    <scope>NUCLEOTIDE SEQUENCE [GENOMIC DNA]</scope>
    <source>
        <strain>ATCC 204508 / S288c</strain>
    </source>
</reference>
<reference key="5">
    <citation type="journal article" date="1997" name="Genetics">
        <title>Proteolytic activation of Rim1p, a positive regulator of yeast sporulation and invasive growth.</title>
        <authorList>
            <person name="Li W."/>
            <person name="Mitchell A.P."/>
        </authorList>
    </citation>
    <scope>PROTEOLYTIC PROCESSING</scope>
</reference>
<reference key="6">
    <citation type="journal article" date="2001" name="J. Biol. Chem.">
        <title>Alkaline response genes of Saccharomyces cerevisiae and their relationship to the RIM101 pathway.</title>
        <authorList>
            <person name="Lamb T.M."/>
            <person name="Xu W."/>
            <person name="Diamond A."/>
            <person name="Mitchell A.P."/>
        </authorList>
    </citation>
    <scope>FUNCTION</scope>
</reference>
<reference key="7">
    <citation type="journal article" date="2001" name="J. Bacteriol.">
        <title>Yeast PalA/AIP1/Alix homolog Rim20p associates with a PEST-like region and is required for its proteolytic cleavage.</title>
        <authorList>
            <person name="Xu W."/>
            <person name="Mitchell A.P."/>
        </authorList>
    </citation>
    <scope>INTERACTION WITH RIM20</scope>
</reference>
<reference key="8">
    <citation type="journal article" date="2003" name="Mol. Cell. Biol.">
        <title>The transcription factor Rim101p governs ion tolerance and cell differentiation by direct repression of the regulatory genes NRG1 and SMP1 in Saccharomyces cerevisiae.</title>
        <authorList>
            <person name="Lamb T.M."/>
            <person name="Mitchell A.P."/>
        </authorList>
    </citation>
    <scope>FUNCTION IN TRANSCRIPTIONAL REPRESSION</scope>
    <scope>DNA-BINDING</scope>
</reference>
<reference key="9">
    <citation type="journal article" date="2003" name="Nature">
        <title>Global analysis of protein localization in budding yeast.</title>
        <authorList>
            <person name="Huh W.-K."/>
            <person name="Falvo J.V."/>
            <person name="Gerke L.C."/>
            <person name="Carroll A.S."/>
            <person name="Howson R.W."/>
            <person name="Weissman J.S."/>
            <person name="O'Shea E.K."/>
        </authorList>
    </citation>
    <scope>SUBCELLULAR LOCATION [LARGE SCALE ANALYSIS]</scope>
</reference>
<reference key="10">
    <citation type="journal article" date="2003" name="Nature">
        <title>Global analysis of protein expression in yeast.</title>
        <authorList>
            <person name="Ghaemmaghami S."/>
            <person name="Huh W.-K."/>
            <person name="Bower K."/>
            <person name="Howson R.W."/>
            <person name="Belle A."/>
            <person name="Dephoure N."/>
            <person name="O'Shea E.K."/>
            <person name="Weissman J.S."/>
        </authorList>
    </citation>
    <scope>LEVEL OF PROTEIN EXPRESSION [LARGE SCALE ANALYSIS]</scope>
</reference>
<reference key="11">
    <citation type="journal article" date="2009" name="Science">
        <title>Global analysis of Cdk1 substrate phosphorylation sites provides insights into evolution.</title>
        <authorList>
            <person name="Holt L.J."/>
            <person name="Tuch B.B."/>
            <person name="Villen J."/>
            <person name="Johnson A.D."/>
            <person name="Gygi S.P."/>
            <person name="Morgan D.O."/>
        </authorList>
    </citation>
    <scope>IDENTIFICATION BY MASS SPECTROMETRY [LARGE SCALE ANALYSIS]</scope>
</reference>
<organism>
    <name type="scientific">Saccharomyces cerevisiae (strain ATCC 204508 / S288c)</name>
    <name type="common">Baker's yeast</name>
    <dbReference type="NCBI Taxonomy" id="559292"/>
    <lineage>
        <taxon>Eukaryota</taxon>
        <taxon>Fungi</taxon>
        <taxon>Dikarya</taxon>
        <taxon>Ascomycota</taxon>
        <taxon>Saccharomycotina</taxon>
        <taxon>Saccharomycetes</taxon>
        <taxon>Saccharomycetales</taxon>
        <taxon>Saccharomycetaceae</taxon>
        <taxon>Saccharomyces</taxon>
    </lineage>
</organism>
<comment type="function">
    <text evidence="4 6">Transcription factor that mediates regulation of both acid- and alkaline-expressed genes in response to ambient pH. At alkaline ambient pH, activates transcription of alkaline-expressed genes (including RIM101 itself), mainly by repressing transcriptional repressors of those genes, and represses transcription of acid-expressed genes. Required for meiosis, sporulation and invasive growth.</text>
</comment>
<comment type="subunit">
    <text evidence="5">Binds to DNA. Interacts with RIM20, which probably binds to the two YPX[LI] motifs and is required for proteolytic processing.</text>
</comment>
<comment type="interaction">
    <interactant intactId="EBI-14422">
        <id>P33400</id>
    </interactant>
    <interactant intactId="EBI-22980">
        <id>P43603</id>
        <label>LSB3</label>
    </interactant>
    <organismsDiffer>false</organismsDiffer>
    <experiments>2</experiments>
</comment>
<comment type="interaction">
    <interactant intactId="EBI-14422">
        <id>P33400</id>
    </interactant>
    <interactant intactId="EBI-38947">
        <id>Q12033</id>
        <label>RIM20</label>
    </interactant>
    <organismsDiffer>false</organismsDiffer>
    <experiments>3</experiments>
</comment>
<comment type="interaction">
    <interactant intactId="EBI-14422">
        <id>P33400</id>
    </interactant>
    <interactant intactId="EBI-24460">
        <id>P32793</id>
        <label>YSC84</label>
    </interactant>
    <organismsDiffer>false</organismsDiffer>
    <experiments>2</experiments>
</comment>
<comment type="subcellular location">
    <subcellularLocation>
        <location evidence="7">Cytoplasm</location>
    </subcellularLocation>
    <subcellularLocation>
        <location evidence="7">Nucleus</location>
    </subcellularLocation>
</comment>
<comment type="PTM">
    <text evidence="10">Activated by C-terminal proteolytic cleavage. At neutral to alkaline ambient pH, the signaling protease (probably RIM13) cleaves RIM101, removing a C-terminal 8 kDa peptide to yield the active form.</text>
</comment>
<comment type="miscellaneous">
    <text evidence="8">Present with 1822 molecules/cell in log phase SD medium.</text>
</comment>
<comment type="similarity">
    <text evidence="11">Belongs to the pacC/RIM101 family.</text>
</comment>
<keyword id="KW-0010">Activator</keyword>
<keyword id="KW-0963">Cytoplasm</keyword>
<keyword id="KW-0238">DNA-binding</keyword>
<keyword id="KW-0469">Meiosis</keyword>
<keyword id="KW-0479">Metal-binding</keyword>
<keyword id="KW-0539">Nucleus</keyword>
<keyword id="KW-1185">Reference proteome</keyword>
<keyword id="KW-0677">Repeat</keyword>
<keyword id="KW-0678">Repressor</keyword>
<keyword id="KW-0804">Transcription</keyword>
<keyword id="KW-0805">Transcription regulation</keyword>
<keyword id="KW-0862">Zinc</keyword>
<keyword id="KW-0863">Zinc-finger</keyword>
<evidence type="ECO:0000250" key="1"/>
<evidence type="ECO:0000255" key="2">
    <source>
        <dbReference type="PROSITE-ProRule" id="PRU00042"/>
    </source>
</evidence>
<evidence type="ECO:0000256" key="3">
    <source>
        <dbReference type="SAM" id="MobiDB-lite"/>
    </source>
</evidence>
<evidence type="ECO:0000269" key="4">
    <source>
    </source>
</evidence>
<evidence type="ECO:0000269" key="5">
    <source>
    </source>
</evidence>
<evidence type="ECO:0000269" key="6">
    <source>
    </source>
</evidence>
<evidence type="ECO:0000269" key="7">
    <source>
    </source>
</evidence>
<evidence type="ECO:0000269" key="8">
    <source>
    </source>
</evidence>
<evidence type="ECO:0000269" key="9">
    <source>
    </source>
</evidence>
<evidence type="ECO:0000269" key="10">
    <source>
    </source>
</evidence>
<evidence type="ECO:0000305" key="11"/>
<protein>
    <recommendedName>
        <fullName>pH-response transcription factor pacC/RIM101</fullName>
    </recommendedName>
    <alternativeName>
        <fullName>Regulator of IME2 protein 1</fullName>
    </alternativeName>
    <alternativeName>
        <fullName>pH-response regulator protein RIM101</fullName>
    </alternativeName>
</protein>
<sequence>MVPLEDLLNKENGTAAPQHSRESIVENGTDVSNVTKKDGLPSPNLSKRSSDCSKRPRIRCTTEAIGLNGQEDERMSPGSTSSSCLPYHSTSHLNTPPYDLLGASAVSPTTSSSSDSSSSSPLAQAHNPAGDDDDADNDGDSEDITLYCKWDNCGMIFNQPELLYNHLCHDHVGRKSHKNLQLNCHWGDCTTKTEKRDHITSHLRVHVPLKPFGCSTCSKKFKRPQDLKKHLKIHLESGGILKRKRGPKWGSKRTSKKNKSCASDAVSSCSASVPSAIAGSFKSHSTSPQILPPLPVGISQHLPSQQQQRAISLNQLCSDELSQYKPVYSPQLSARLQTILPPLYYNNGSTVSQGANSRSMNVYEDGCSNKTIANATQFFTKLSRNMTNNYILQQSGGSTESSSSSGRIPVAQTSYVQPPNAPSYQSVQGGSSISATANTATYVPVRLAKYPTGPSLTEHLPPLHSNTAGGVFNRQSQYAMPHYPSVRAAPSYSSSGCSILPPLQSKIPMLPSRRTMAGGTSLKPNWEFSLNQKSCTNDIIMSKLAIEEVDDESEIEDDFVEMLGIVNIIKDYLLCCVMEDLDDEESEDKDEENAFLQESLEKLSLQNQMGTNSVRILTKYPKILV</sequence>
<accession>P33400</accession>
<accession>D3DKU1</accession>
<dbReference type="EMBL" id="X72960">
    <property type="protein sequence ID" value="CAA51462.1"/>
    <property type="molecule type" value="Genomic_DNA"/>
</dbReference>
<dbReference type="EMBL" id="U11583">
    <property type="protein sequence ID" value="AAB65039.1"/>
    <property type="molecule type" value="Genomic_DNA"/>
</dbReference>
<dbReference type="EMBL" id="AY693138">
    <property type="protein sequence ID" value="AAT93157.1"/>
    <property type="molecule type" value="Genomic_DNA"/>
</dbReference>
<dbReference type="EMBL" id="BK006934">
    <property type="protein sequence ID" value="DAA06658.1"/>
    <property type="molecule type" value="Genomic_DNA"/>
</dbReference>
<dbReference type="PIR" id="S48941">
    <property type="entry name" value="S48941"/>
</dbReference>
<dbReference type="RefSeq" id="NP_011836.1">
    <property type="nucleotide sequence ID" value="NM_001179107.1"/>
</dbReference>
<dbReference type="BioGRID" id="36395">
    <property type="interactions" value="483"/>
</dbReference>
<dbReference type="DIP" id="DIP-1564N"/>
<dbReference type="FunCoup" id="P33400">
    <property type="interactions" value="1870"/>
</dbReference>
<dbReference type="IntAct" id="P33400">
    <property type="interactions" value="12"/>
</dbReference>
<dbReference type="MINT" id="P33400"/>
<dbReference type="STRING" id="4932.YHL027W"/>
<dbReference type="GlyGen" id="P33400">
    <property type="glycosylation" value="3 sites, 1 O-linked glycan (2 sites)"/>
</dbReference>
<dbReference type="iPTMnet" id="P33400"/>
<dbReference type="PaxDb" id="4932-YHL027W"/>
<dbReference type="PeptideAtlas" id="P33400"/>
<dbReference type="EnsemblFungi" id="YHL027W_mRNA">
    <property type="protein sequence ID" value="YHL027W"/>
    <property type="gene ID" value="YHL027W"/>
</dbReference>
<dbReference type="GeneID" id="856358"/>
<dbReference type="KEGG" id="sce:YHL027W"/>
<dbReference type="AGR" id="SGD:S000001019"/>
<dbReference type="SGD" id="S000001019">
    <property type="gene designation" value="RIM101"/>
</dbReference>
<dbReference type="VEuPathDB" id="FungiDB:YHL027W"/>
<dbReference type="eggNOG" id="KOG1721">
    <property type="taxonomic scope" value="Eukaryota"/>
</dbReference>
<dbReference type="HOGENOM" id="CLU_029652_0_0_1"/>
<dbReference type="InParanoid" id="P33400"/>
<dbReference type="OMA" id="DRIWGYM"/>
<dbReference type="OrthoDB" id="6155966at2759"/>
<dbReference type="BioCyc" id="YEAST:G3O-31047-MONOMER"/>
<dbReference type="BioGRID-ORCS" id="856358">
    <property type="hits" value="1 hit in 13 CRISPR screens"/>
</dbReference>
<dbReference type="PRO" id="PR:P33400"/>
<dbReference type="Proteomes" id="UP000002311">
    <property type="component" value="Chromosome VIII"/>
</dbReference>
<dbReference type="RNAct" id="P33400">
    <property type="molecule type" value="protein"/>
</dbReference>
<dbReference type="GO" id="GO:0005737">
    <property type="term" value="C:cytoplasm"/>
    <property type="evidence" value="ECO:0007669"/>
    <property type="project" value="UniProtKB-SubCell"/>
</dbReference>
<dbReference type="GO" id="GO:0005634">
    <property type="term" value="C:nucleus"/>
    <property type="evidence" value="ECO:0000314"/>
    <property type="project" value="SGD"/>
</dbReference>
<dbReference type="GO" id="GO:0003677">
    <property type="term" value="F:DNA binding"/>
    <property type="evidence" value="ECO:0007669"/>
    <property type="project" value="UniProtKB-KW"/>
</dbReference>
<dbReference type="GO" id="GO:0001227">
    <property type="term" value="F:DNA-binding transcription repressor activity, RNA polymerase II-specific"/>
    <property type="evidence" value="ECO:0000314"/>
    <property type="project" value="SGD"/>
</dbReference>
<dbReference type="GO" id="GO:0008270">
    <property type="term" value="F:zinc ion binding"/>
    <property type="evidence" value="ECO:0007669"/>
    <property type="project" value="UniProtKB-KW"/>
</dbReference>
<dbReference type="GO" id="GO:0030437">
    <property type="term" value="P:ascospore formation"/>
    <property type="evidence" value="ECO:0000315"/>
    <property type="project" value="SGD"/>
</dbReference>
<dbReference type="GO" id="GO:0071469">
    <property type="term" value="P:cellular response to alkaline pH"/>
    <property type="evidence" value="ECO:0000315"/>
    <property type="project" value="SGD"/>
</dbReference>
<dbReference type="GO" id="GO:0071454">
    <property type="term" value="P:cellular response to anoxia"/>
    <property type="evidence" value="ECO:0000315"/>
    <property type="project" value="SGD"/>
</dbReference>
<dbReference type="GO" id="GO:0009272">
    <property type="term" value="P:fungal-type cell wall biogenesis"/>
    <property type="evidence" value="ECO:0000315"/>
    <property type="project" value="SGD"/>
</dbReference>
<dbReference type="GO" id="GO:0051321">
    <property type="term" value="P:meiotic cell cycle"/>
    <property type="evidence" value="ECO:0000315"/>
    <property type="project" value="SGD"/>
</dbReference>
<dbReference type="GO" id="GO:0000122">
    <property type="term" value="P:negative regulation of transcription by RNA polymerase II"/>
    <property type="evidence" value="ECO:0000314"/>
    <property type="project" value="SGD"/>
</dbReference>
<dbReference type="GO" id="GO:0010973">
    <property type="term" value="P:positive regulation of division septum assembly"/>
    <property type="evidence" value="ECO:0000316"/>
    <property type="project" value="SGD"/>
</dbReference>
<dbReference type="GO" id="GO:0045944">
    <property type="term" value="P:positive regulation of transcription by RNA polymerase II"/>
    <property type="evidence" value="ECO:0000315"/>
    <property type="project" value="SGD"/>
</dbReference>
<dbReference type="FunFam" id="3.30.160.60:FF:001369">
    <property type="entry name" value="pH-response transcription factor pacC/RIM101"/>
    <property type="match status" value="1"/>
</dbReference>
<dbReference type="FunFam" id="3.30.160.60:FF:000340">
    <property type="entry name" value="zinc finger protein 473 isoform X1"/>
    <property type="match status" value="1"/>
</dbReference>
<dbReference type="Gene3D" id="3.30.160.60">
    <property type="entry name" value="Classic Zinc Finger"/>
    <property type="match status" value="2"/>
</dbReference>
<dbReference type="InterPro" id="IPR050806">
    <property type="entry name" value="pacC/RIM101"/>
</dbReference>
<dbReference type="InterPro" id="IPR048420">
    <property type="entry name" value="Zap1-like_Znf1"/>
</dbReference>
<dbReference type="InterPro" id="IPR036236">
    <property type="entry name" value="Znf_C2H2_sf"/>
</dbReference>
<dbReference type="InterPro" id="IPR013087">
    <property type="entry name" value="Znf_C2H2_type"/>
</dbReference>
<dbReference type="PANTHER" id="PTHR47257">
    <property type="entry name" value="PH-RESPONSE TRANSCRIPTION FACTOR PACC/RIM101"/>
    <property type="match status" value="1"/>
</dbReference>
<dbReference type="PANTHER" id="PTHR47257:SF1">
    <property type="entry name" value="PH-RESPONSE TRANSCRIPTION FACTOR PACC_RIM101"/>
    <property type="match status" value="1"/>
</dbReference>
<dbReference type="Pfam" id="PF21816">
    <property type="entry name" value="Zap1_zf1"/>
    <property type="match status" value="1"/>
</dbReference>
<dbReference type="Pfam" id="PF00096">
    <property type="entry name" value="zf-C2H2"/>
    <property type="match status" value="1"/>
</dbReference>
<dbReference type="SMART" id="SM00355">
    <property type="entry name" value="ZnF_C2H2"/>
    <property type="match status" value="3"/>
</dbReference>
<dbReference type="SUPFAM" id="SSF57667">
    <property type="entry name" value="beta-beta-alpha zinc fingers"/>
    <property type="match status" value="2"/>
</dbReference>
<dbReference type="PROSITE" id="PS00028">
    <property type="entry name" value="ZINC_FINGER_C2H2_1"/>
    <property type="match status" value="2"/>
</dbReference>
<dbReference type="PROSITE" id="PS50157">
    <property type="entry name" value="ZINC_FINGER_C2H2_2"/>
    <property type="match status" value="3"/>
</dbReference>
<gene>
    <name type="primary">RIM101</name>
    <name type="synonym">RIM1</name>
    <name type="ordered locus">YHL027W</name>
</gene>
<name>PACC_YEAST</name>
<proteinExistence type="evidence at protein level"/>
<feature type="chain" id="PRO_0000046847" description="pH-response transcription factor pacC/RIM101">
    <location>
        <begin position="1"/>
        <end position="625"/>
    </location>
</feature>
<feature type="zinc finger region" description="C2H2-type 1" evidence="2">
    <location>
        <begin position="146"/>
        <end position="171"/>
    </location>
</feature>
<feature type="zinc finger region" description="C2H2-type 2" evidence="2">
    <location>
        <begin position="182"/>
        <end position="206"/>
    </location>
</feature>
<feature type="zinc finger region" description="C2H2-type 3" evidence="2">
    <location>
        <begin position="212"/>
        <end position="234"/>
    </location>
</feature>
<feature type="region of interest" description="Disordered" evidence="3">
    <location>
        <begin position="1"/>
        <end position="138"/>
    </location>
</feature>
<feature type="short sequence motif" description="Nuclear localization signal" evidence="1">
    <location>
        <begin position="228"/>
        <end position="234"/>
    </location>
</feature>
<feature type="short sequence motif" description="YPX[LI] motif 1">
    <location>
        <begin position="450"/>
        <end position="453"/>
    </location>
</feature>
<feature type="short sequence motif" description="YPX[LI] motif 2">
    <location>
        <begin position="620"/>
        <end position="623"/>
    </location>
</feature>
<feature type="compositionally biased region" description="Polar residues" evidence="3">
    <location>
        <begin position="77"/>
        <end position="94"/>
    </location>
</feature>
<feature type="compositionally biased region" description="Low complexity" evidence="3">
    <location>
        <begin position="107"/>
        <end position="121"/>
    </location>
</feature>
<feature type="mutagenesis site" description="Abolishes transcriptional activation of target genes." evidence="9">
    <original>C</original>
    <variation>S</variation>
    <location>
        <position position="153"/>
    </location>
</feature>
<feature type="mutagenesis site" description="Abolishes transcriptional activation of target genes." evidence="9">
    <original>C</original>
    <variation>S</variation>
    <location>
        <position position="189"/>
    </location>
</feature>
<feature type="mutagenesis site" description="Abolishes transcriptional activation of target genes." evidence="9">
    <original>C</original>
    <variation>S</variation>
    <location>
        <position position="217"/>
    </location>
</feature>
<feature type="mutagenesis site" description="Reduces transcriptional activation of target genes." evidence="9">
    <original>S</original>
    <variation>A</variation>
    <location>
        <position position="255"/>
    </location>
</feature>
<feature type="sequence conflict" description="In Ref. 1; CAA51462." evidence="11" ref="1">
    <original>N</original>
    <variation>K</variation>
    <location>
        <position position="68"/>
    </location>
</feature>
<feature type="sequence conflict" description="In Ref. 1; CAA51462." evidence="11" ref="1">
    <original>T</original>
    <variation>S</variation>
    <location>
        <position position="90"/>
    </location>
</feature>
<feature type="sequence conflict" description="In Ref. 1; CAA51462." evidence="11" ref="1">
    <original>S</original>
    <variation>P</variation>
    <location>
        <position position="111"/>
    </location>
</feature>
<feature type="sequence conflict" description="In Ref. 1; CAA51462." evidence="11" ref="1">
    <original>W</original>
    <variation>L</variation>
    <location>
        <position position="249"/>
    </location>
</feature>
<feature type="sequence conflict" description="In Ref. 1; CAA51462." evidence="11" ref="1">
    <original>C</original>
    <variation>S</variation>
    <location>
        <position position="261"/>
    </location>
</feature>
<feature type="sequence conflict" description="In Ref. 1; CAA51462." evidence="11" ref="1">
    <original>A</original>
    <variation>G</variation>
    <location>
        <position position="276"/>
    </location>
</feature>
<feature type="sequence conflict" description="In Ref. 1." evidence="11" ref="1">
    <original>Q</original>
    <variation>QQQQ</variation>
    <location>
        <position position="308"/>
    </location>
</feature>
<feature type="sequence conflict" description="In Ref. 1; CAA51462." evidence="11" ref="1">
    <original>R</original>
    <variation>Q</variation>
    <location>
        <position position="358"/>
    </location>
</feature>
<feature type="sequence conflict" description="In Ref. 1; CAA51462." evidence="11" ref="1">
    <original>V</original>
    <variation>I</variation>
    <location>
        <position position="486"/>
    </location>
</feature>
<feature type="sequence conflict" description="In Ref. 1; CAA51462." evidence="11" ref="1">
    <original>G</original>
    <variation>E</variation>
    <location>
        <position position="519"/>
    </location>
</feature>